<sequence>MTVSINEVSKYFSKQTGTVQVLENINFQLEKGDFVTVIGPSGCGKSTLLKIVAGLDNDFEGEIIIDGERITKPSKKQGFIFQEHRLFPWLTVEENIAADLSLKDKYVKDKVKEWVEIVRLDGFEKSYPKEISGGMSQRVAIARALLRDPSVLLLDEPFGALDAFTRSHLQEVLLNIWEQKKTTMIFVTHDIDEAIYLSNRIVIMSAKPGEIHKVIENNLSYPRNKTSQSFQQLRTKVLQQFEHGGLIQTSI</sequence>
<name>SSUB_BACHK</name>
<keyword id="KW-0067">ATP-binding</keyword>
<keyword id="KW-1003">Cell membrane</keyword>
<keyword id="KW-0472">Membrane</keyword>
<keyword id="KW-0547">Nucleotide-binding</keyword>
<keyword id="KW-1278">Translocase</keyword>
<keyword id="KW-0813">Transport</keyword>
<gene>
    <name evidence="1" type="primary">ssuB</name>
    <name type="ordered locus">BT9727_2665</name>
</gene>
<comment type="function">
    <text evidence="1">Part of the ABC transporter complex SsuABC involved in aliphatic sulfonates import. Responsible for energy coupling to the transport system.</text>
</comment>
<comment type="catalytic activity">
    <reaction evidence="1">
        <text>ATP + H2O + aliphatic sulfonate-[sulfonate-binding protein]Side 1 = ADP + phosphate + aliphatic sulfonateSide 2 + [sulfonate-binding protein]Side 1.</text>
        <dbReference type="EC" id="7.6.2.14"/>
    </reaction>
</comment>
<comment type="subunit">
    <text evidence="1">The complex is composed of two ATP-binding proteins (SsuB), two transmembrane proteins (SsuC) and a solute-binding protein (SsuA).</text>
</comment>
<comment type="subcellular location">
    <subcellularLocation>
        <location evidence="1">Cell membrane</location>
        <topology evidence="1">Peripheral membrane protein</topology>
    </subcellularLocation>
</comment>
<comment type="similarity">
    <text evidence="1">Belongs to the ABC transporter superfamily. Aliphatic sulfonates importer (TC 3.A.1.17.2) family.</text>
</comment>
<reference key="1">
    <citation type="journal article" date="2006" name="J. Bacteriol.">
        <title>Pathogenomic sequence analysis of Bacillus cereus and Bacillus thuringiensis isolates closely related to Bacillus anthracis.</title>
        <authorList>
            <person name="Han C.S."/>
            <person name="Xie G."/>
            <person name="Challacombe J.F."/>
            <person name="Altherr M.R."/>
            <person name="Bhotika S.S."/>
            <person name="Bruce D."/>
            <person name="Campbell C.S."/>
            <person name="Campbell M.L."/>
            <person name="Chen J."/>
            <person name="Chertkov O."/>
            <person name="Cleland C."/>
            <person name="Dimitrijevic M."/>
            <person name="Doggett N.A."/>
            <person name="Fawcett J.J."/>
            <person name="Glavina T."/>
            <person name="Goodwin L.A."/>
            <person name="Hill K.K."/>
            <person name="Hitchcock P."/>
            <person name="Jackson P.J."/>
            <person name="Keim P."/>
            <person name="Kewalramani A.R."/>
            <person name="Longmire J."/>
            <person name="Lucas S."/>
            <person name="Malfatti S."/>
            <person name="McMurry K."/>
            <person name="Meincke L.J."/>
            <person name="Misra M."/>
            <person name="Moseman B.L."/>
            <person name="Mundt M."/>
            <person name="Munk A.C."/>
            <person name="Okinaka R.T."/>
            <person name="Parson-Quintana B."/>
            <person name="Reilly L.P."/>
            <person name="Richardson P."/>
            <person name="Robinson D.L."/>
            <person name="Rubin E."/>
            <person name="Saunders E."/>
            <person name="Tapia R."/>
            <person name="Tesmer J.G."/>
            <person name="Thayer N."/>
            <person name="Thompson L.S."/>
            <person name="Tice H."/>
            <person name="Ticknor L.O."/>
            <person name="Wills P.L."/>
            <person name="Brettin T.S."/>
            <person name="Gilna P."/>
        </authorList>
    </citation>
    <scope>NUCLEOTIDE SEQUENCE [LARGE SCALE GENOMIC DNA]</scope>
    <source>
        <strain>97-27</strain>
    </source>
</reference>
<accession>Q6HHI7</accession>
<organism>
    <name type="scientific">Bacillus thuringiensis subsp. konkukian (strain 97-27)</name>
    <dbReference type="NCBI Taxonomy" id="281309"/>
    <lineage>
        <taxon>Bacteria</taxon>
        <taxon>Bacillati</taxon>
        <taxon>Bacillota</taxon>
        <taxon>Bacilli</taxon>
        <taxon>Bacillales</taxon>
        <taxon>Bacillaceae</taxon>
        <taxon>Bacillus</taxon>
        <taxon>Bacillus cereus group</taxon>
    </lineage>
</organism>
<protein>
    <recommendedName>
        <fullName evidence="1">Aliphatic sulfonates import ATP-binding protein SsuB</fullName>
        <ecNumber evidence="1">7.6.2.14</ecNumber>
    </recommendedName>
</protein>
<dbReference type="EC" id="7.6.2.14" evidence="1"/>
<dbReference type="EMBL" id="AE017355">
    <property type="protein sequence ID" value="AAT61269.1"/>
    <property type="molecule type" value="Genomic_DNA"/>
</dbReference>
<dbReference type="RefSeq" id="WP_000218627.1">
    <property type="nucleotide sequence ID" value="NC_005957.1"/>
</dbReference>
<dbReference type="RefSeq" id="YP_036989.1">
    <property type="nucleotide sequence ID" value="NC_005957.1"/>
</dbReference>
<dbReference type="SMR" id="Q6HHI7"/>
<dbReference type="KEGG" id="btk:BT9727_2665"/>
<dbReference type="PATRIC" id="fig|281309.8.peg.2829"/>
<dbReference type="HOGENOM" id="CLU_000604_1_22_9"/>
<dbReference type="Proteomes" id="UP000001301">
    <property type="component" value="Chromosome"/>
</dbReference>
<dbReference type="GO" id="GO:0005886">
    <property type="term" value="C:plasma membrane"/>
    <property type="evidence" value="ECO:0007669"/>
    <property type="project" value="UniProtKB-SubCell"/>
</dbReference>
<dbReference type="GO" id="GO:0005524">
    <property type="term" value="F:ATP binding"/>
    <property type="evidence" value="ECO:0007669"/>
    <property type="project" value="UniProtKB-KW"/>
</dbReference>
<dbReference type="GO" id="GO:0016887">
    <property type="term" value="F:ATP hydrolysis activity"/>
    <property type="evidence" value="ECO:0007669"/>
    <property type="project" value="InterPro"/>
</dbReference>
<dbReference type="CDD" id="cd03293">
    <property type="entry name" value="ABC_NrtD_SsuB_transporters"/>
    <property type="match status" value="1"/>
</dbReference>
<dbReference type="FunFam" id="3.40.50.300:FF:001273">
    <property type="entry name" value="Aliphatic sulfonates import ATP-binding protein SsuB"/>
    <property type="match status" value="1"/>
</dbReference>
<dbReference type="Gene3D" id="3.40.50.300">
    <property type="entry name" value="P-loop containing nucleotide triphosphate hydrolases"/>
    <property type="match status" value="1"/>
</dbReference>
<dbReference type="InterPro" id="IPR003593">
    <property type="entry name" value="AAA+_ATPase"/>
</dbReference>
<dbReference type="InterPro" id="IPR003439">
    <property type="entry name" value="ABC_transporter-like_ATP-bd"/>
</dbReference>
<dbReference type="InterPro" id="IPR017871">
    <property type="entry name" value="ABC_transporter-like_CS"/>
</dbReference>
<dbReference type="InterPro" id="IPR050166">
    <property type="entry name" value="ABC_transporter_ATP-bind"/>
</dbReference>
<dbReference type="InterPro" id="IPR027417">
    <property type="entry name" value="P-loop_NTPase"/>
</dbReference>
<dbReference type="PANTHER" id="PTHR42788:SF13">
    <property type="entry name" value="ALIPHATIC SULFONATES IMPORT ATP-BINDING PROTEIN SSUB"/>
    <property type="match status" value="1"/>
</dbReference>
<dbReference type="PANTHER" id="PTHR42788">
    <property type="entry name" value="TAURINE IMPORT ATP-BINDING PROTEIN-RELATED"/>
    <property type="match status" value="1"/>
</dbReference>
<dbReference type="Pfam" id="PF00005">
    <property type="entry name" value="ABC_tran"/>
    <property type="match status" value="1"/>
</dbReference>
<dbReference type="SMART" id="SM00382">
    <property type="entry name" value="AAA"/>
    <property type="match status" value="1"/>
</dbReference>
<dbReference type="SUPFAM" id="SSF52540">
    <property type="entry name" value="P-loop containing nucleoside triphosphate hydrolases"/>
    <property type="match status" value="1"/>
</dbReference>
<dbReference type="PROSITE" id="PS00211">
    <property type="entry name" value="ABC_TRANSPORTER_1"/>
    <property type="match status" value="1"/>
</dbReference>
<dbReference type="PROSITE" id="PS50893">
    <property type="entry name" value="ABC_TRANSPORTER_2"/>
    <property type="match status" value="1"/>
</dbReference>
<dbReference type="PROSITE" id="PS51291">
    <property type="entry name" value="SSUB"/>
    <property type="match status" value="1"/>
</dbReference>
<proteinExistence type="inferred from homology"/>
<feature type="chain" id="PRO_0000279893" description="Aliphatic sulfonates import ATP-binding protein SsuB">
    <location>
        <begin position="1"/>
        <end position="251"/>
    </location>
</feature>
<feature type="domain" description="ABC transporter" evidence="1">
    <location>
        <begin position="3"/>
        <end position="231"/>
    </location>
</feature>
<feature type="binding site" evidence="1">
    <location>
        <begin position="39"/>
        <end position="46"/>
    </location>
    <ligand>
        <name>ATP</name>
        <dbReference type="ChEBI" id="CHEBI:30616"/>
    </ligand>
</feature>
<evidence type="ECO:0000255" key="1">
    <source>
        <dbReference type="HAMAP-Rule" id="MF_01724"/>
    </source>
</evidence>